<sequence>MSAGRLNKKSLGIVMLLSVGLLLAGCSGSKSSDTGTYSGSVYTVKRGDTLYRISRTTGTSVKELARLNGISPPYTIEVGQKLKLGGAKSSSITRKSTAKSTTKTASVTPSSAVPKSSWPPVGQRCWLWPTTGKVIMPYSTADGGNKGIDISAPRGTPIYAAGAGKVVYVGNQLRGYGNLIMIKHSEDYITAYAHNDTMLVNNGQSVKAGQKIATMGSTDAASVRLHFQIRYRATAIDPLRYLPPQGSKPKC</sequence>
<feature type="signal peptide" evidence="1">
    <location>
        <begin position="1"/>
        <end position="25"/>
    </location>
</feature>
<feature type="chain" id="PRO_0000013776" description="Uncharacterized lipoprotein YgeR">
    <location>
        <begin position="26"/>
        <end position="251"/>
    </location>
</feature>
<feature type="domain" description="LysM" evidence="2">
    <location>
        <begin position="40"/>
        <end position="84"/>
    </location>
</feature>
<feature type="region of interest" description="Disordered" evidence="3">
    <location>
        <begin position="93"/>
        <end position="115"/>
    </location>
</feature>
<feature type="compositionally biased region" description="Low complexity" evidence="3">
    <location>
        <begin position="93"/>
        <end position="112"/>
    </location>
</feature>
<feature type="lipid moiety-binding region" description="N-palmitoyl cysteine" evidence="1">
    <location>
        <position position="26"/>
    </location>
</feature>
<feature type="lipid moiety-binding region" description="S-diacylglycerol cysteine" evidence="1">
    <location>
        <position position="26"/>
    </location>
</feature>
<dbReference type="EMBL" id="U28375">
    <property type="protein sequence ID" value="AAA83046.1"/>
    <property type="status" value="ALT_INIT"/>
    <property type="molecule type" value="Genomic_DNA"/>
</dbReference>
<dbReference type="EMBL" id="U00096">
    <property type="protein sequence ID" value="AAC75903.2"/>
    <property type="molecule type" value="Genomic_DNA"/>
</dbReference>
<dbReference type="EMBL" id="AP009048">
    <property type="protein sequence ID" value="BAE76931.1"/>
    <property type="molecule type" value="Genomic_DNA"/>
</dbReference>
<dbReference type="PIR" id="A65070">
    <property type="entry name" value="A65070"/>
</dbReference>
<dbReference type="RefSeq" id="NP_417341.4">
    <property type="nucleotide sequence ID" value="NC_000913.3"/>
</dbReference>
<dbReference type="SMR" id="Q46798"/>
<dbReference type="BioGRID" id="4262318">
    <property type="interactions" value="190"/>
</dbReference>
<dbReference type="DIP" id="DIP-36034N"/>
<dbReference type="FunCoup" id="Q46798">
    <property type="interactions" value="90"/>
</dbReference>
<dbReference type="IntAct" id="Q46798">
    <property type="interactions" value="5"/>
</dbReference>
<dbReference type="STRING" id="511145.b2865"/>
<dbReference type="jPOST" id="Q46798"/>
<dbReference type="PaxDb" id="511145-b2865"/>
<dbReference type="EnsemblBacteria" id="AAC75903">
    <property type="protein sequence ID" value="AAC75903"/>
    <property type="gene ID" value="b2865"/>
</dbReference>
<dbReference type="GeneID" id="947352"/>
<dbReference type="KEGG" id="ecj:JW2833"/>
<dbReference type="KEGG" id="eco:b2865"/>
<dbReference type="KEGG" id="ecoc:C3026_15720"/>
<dbReference type="PATRIC" id="fig|511145.12.peg.2958"/>
<dbReference type="EchoBASE" id="EB2860"/>
<dbReference type="eggNOG" id="COG4942">
    <property type="taxonomic scope" value="Bacteria"/>
</dbReference>
<dbReference type="HOGENOM" id="CLU_029425_0_4_6"/>
<dbReference type="InParanoid" id="Q46798"/>
<dbReference type="OMA" id="IMIKHGE"/>
<dbReference type="OrthoDB" id="9795421at2"/>
<dbReference type="PhylomeDB" id="Q46798"/>
<dbReference type="BioCyc" id="EcoCyc:G7484-MONOMER"/>
<dbReference type="BioCyc" id="MetaCyc:G7484-MONOMER"/>
<dbReference type="PRO" id="PR:Q46798"/>
<dbReference type="Proteomes" id="UP000000625">
    <property type="component" value="Chromosome"/>
</dbReference>
<dbReference type="GO" id="GO:0032153">
    <property type="term" value="C:cell division site"/>
    <property type="evidence" value="ECO:0000318"/>
    <property type="project" value="GO_Central"/>
</dbReference>
<dbReference type="GO" id="GO:0009279">
    <property type="term" value="C:cell outer membrane"/>
    <property type="evidence" value="ECO:0000318"/>
    <property type="project" value="GO_Central"/>
</dbReference>
<dbReference type="GO" id="GO:0005886">
    <property type="term" value="C:plasma membrane"/>
    <property type="evidence" value="ECO:0007669"/>
    <property type="project" value="UniProtKB-SubCell"/>
</dbReference>
<dbReference type="GO" id="GO:0004222">
    <property type="term" value="F:metalloendopeptidase activity"/>
    <property type="evidence" value="ECO:0000318"/>
    <property type="project" value="GO_Central"/>
</dbReference>
<dbReference type="GO" id="GO:0036460">
    <property type="term" value="P:cellular response to cell envelope stress"/>
    <property type="evidence" value="ECO:0000269"/>
    <property type="project" value="EcoCyc"/>
</dbReference>
<dbReference type="CDD" id="cd00118">
    <property type="entry name" value="LysM"/>
    <property type="match status" value="1"/>
</dbReference>
<dbReference type="CDD" id="cd12797">
    <property type="entry name" value="M23_peptidase"/>
    <property type="match status" value="1"/>
</dbReference>
<dbReference type="FunFam" id="2.70.70.10:FF:000005">
    <property type="entry name" value="Hypothetical lipoprotein YgeR"/>
    <property type="match status" value="1"/>
</dbReference>
<dbReference type="FunFam" id="3.10.350.10:FF:000006">
    <property type="entry name" value="YgeR family lipoprotein"/>
    <property type="match status" value="1"/>
</dbReference>
<dbReference type="Gene3D" id="2.70.70.10">
    <property type="entry name" value="Glucose Permease (Domain IIA)"/>
    <property type="match status" value="1"/>
</dbReference>
<dbReference type="Gene3D" id="3.10.350.10">
    <property type="entry name" value="LysM domain"/>
    <property type="match status" value="1"/>
</dbReference>
<dbReference type="InterPro" id="IPR050570">
    <property type="entry name" value="Cell_wall_metabolism_enzyme"/>
</dbReference>
<dbReference type="InterPro" id="IPR011055">
    <property type="entry name" value="Dup_hybrid_motif"/>
</dbReference>
<dbReference type="InterPro" id="IPR018392">
    <property type="entry name" value="LysM_dom"/>
</dbReference>
<dbReference type="InterPro" id="IPR036779">
    <property type="entry name" value="LysM_dom_sf"/>
</dbReference>
<dbReference type="InterPro" id="IPR016047">
    <property type="entry name" value="Peptidase_M23"/>
</dbReference>
<dbReference type="InterPro" id="IPR053529">
    <property type="entry name" value="Peptidase_M23B"/>
</dbReference>
<dbReference type="NCBIfam" id="NF040883">
    <property type="entry name" value="amid_act_ActS"/>
    <property type="match status" value="1"/>
</dbReference>
<dbReference type="PANTHER" id="PTHR21666:SF269">
    <property type="entry name" value="METALLOENDOPEPTIDASE"/>
    <property type="match status" value="1"/>
</dbReference>
<dbReference type="PANTHER" id="PTHR21666">
    <property type="entry name" value="PEPTIDASE-RELATED"/>
    <property type="match status" value="1"/>
</dbReference>
<dbReference type="Pfam" id="PF01476">
    <property type="entry name" value="LysM"/>
    <property type="match status" value="1"/>
</dbReference>
<dbReference type="Pfam" id="PF01551">
    <property type="entry name" value="Peptidase_M23"/>
    <property type="match status" value="1"/>
</dbReference>
<dbReference type="SMART" id="SM00257">
    <property type="entry name" value="LysM"/>
    <property type="match status" value="1"/>
</dbReference>
<dbReference type="SUPFAM" id="SSF51261">
    <property type="entry name" value="Duplicated hybrid motif"/>
    <property type="match status" value="1"/>
</dbReference>
<dbReference type="PROSITE" id="PS51782">
    <property type="entry name" value="LYSM"/>
    <property type="match status" value="1"/>
</dbReference>
<dbReference type="PROSITE" id="PS51257">
    <property type="entry name" value="PROKAR_LIPOPROTEIN"/>
    <property type="match status" value="1"/>
</dbReference>
<proteinExistence type="inferred from homology"/>
<evidence type="ECO:0000255" key="1">
    <source>
        <dbReference type="PROSITE-ProRule" id="PRU00303"/>
    </source>
</evidence>
<evidence type="ECO:0000255" key="2">
    <source>
        <dbReference type="PROSITE-ProRule" id="PRU01118"/>
    </source>
</evidence>
<evidence type="ECO:0000256" key="3">
    <source>
        <dbReference type="SAM" id="MobiDB-lite"/>
    </source>
</evidence>
<evidence type="ECO:0000269" key="4">
    <source>
    </source>
</evidence>
<evidence type="ECO:0000305" key="5"/>
<reference key="1">
    <citation type="journal article" date="1997" name="Science">
        <title>The complete genome sequence of Escherichia coli K-12.</title>
        <authorList>
            <person name="Blattner F.R."/>
            <person name="Plunkett G. III"/>
            <person name="Bloch C.A."/>
            <person name="Perna N.T."/>
            <person name="Burland V."/>
            <person name="Riley M."/>
            <person name="Collado-Vides J."/>
            <person name="Glasner J.D."/>
            <person name="Rode C.K."/>
            <person name="Mayhew G.F."/>
            <person name="Gregor J."/>
            <person name="Davis N.W."/>
            <person name="Kirkpatrick H.A."/>
            <person name="Goeden M.A."/>
            <person name="Rose D.J."/>
            <person name="Mau B."/>
            <person name="Shao Y."/>
        </authorList>
    </citation>
    <scope>NUCLEOTIDE SEQUENCE [LARGE SCALE GENOMIC DNA]</scope>
    <source>
        <strain>K12 / MG1655 / ATCC 47076</strain>
    </source>
</reference>
<reference key="2">
    <citation type="journal article" date="2006" name="Mol. Syst. Biol.">
        <title>Highly accurate genome sequences of Escherichia coli K-12 strains MG1655 and W3110.</title>
        <authorList>
            <person name="Hayashi K."/>
            <person name="Morooka N."/>
            <person name="Yamamoto Y."/>
            <person name="Fujita K."/>
            <person name="Isono K."/>
            <person name="Choi S."/>
            <person name="Ohtsubo E."/>
            <person name="Baba T."/>
            <person name="Wanner B.L."/>
            <person name="Mori H."/>
            <person name="Horiuchi T."/>
        </authorList>
    </citation>
    <scope>NUCLEOTIDE SEQUENCE [LARGE SCALE GENOMIC DNA]</scope>
    <source>
        <strain>K12 / W3110 / ATCC 27325 / DSM 5911</strain>
    </source>
</reference>
<reference key="3">
    <citation type="journal article" date="2009" name="J. Bacteriol.">
        <title>LytM-domain factors are required for daughter cell separation and rapid ampicillin-induced lysis in Escherichia coli.</title>
        <authorList>
            <person name="Uehara T."/>
            <person name="Dinh T."/>
            <person name="Bernhardt T.G."/>
        </authorList>
    </citation>
    <scope>POSSIBLE SUBCELLULAR LOCATION</scope>
    <scope>DISRUPTION PHENOTYPE</scope>
    <source>
        <strain>K12 / MG1655 / TB28</strain>
    </source>
</reference>
<comment type="subcellular location">
    <subcellularLocation>
        <location evidence="5">Cell inner membrane</location>
        <topology evidence="1">Lipid-anchor</topology>
    </subcellularLocation>
    <text>Slightly enriched at the septal ring.</text>
</comment>
<comment type="disruption phenotype">
    <text evidence="4">Cells are shorter in a single mutant, while triple envC-nlpD-ygeR disruptions have defects in septation and cell separation and form long filaments (15-fold longer) and further yet by the quadruple disruption mutant (envC-nlpD-mepM(yebA)-ygeR, over 21-fold longer). Quadruple mutants are less sensitive to ampicillin lysis.</text>
</comment>
<comment type="similarity">
    <text evidence="5">Belongs to the peptidase M23B family.</text>
</comment>
<comment type="sequence caution" evidence="5">
    <conflict type="erroneous initiation">
        <sequence resource="EMBL-CDS" id="AAA83046"/>
    </conflict>
    <text>Extended N-terminus.</text>
</comment>
<organism>
    <name type="scientific">Escherichia coli (strain K12)</name>
    <dbReference type="NCBI Taxonomy" id="83333"/>
    <lineage>
        <taxon>Bacteria</taxon>
        <taxon>Pseudomonadati</taxon>
        <taxon>Pseudomonadota</taxon>
        <taxon>Gammaproteobacteria</taxon>
        <taxon>Enterobacterales</taxon>
        <taxon>Enterobacteriaceae</taxon>
        <taxon>Escherichia</taxon>
    </lineage>
</organism>
<accession>Q46798</accession>
<accession>Q2M9X5</accession>
<keyword id="KW-0997">Cell inner membrane</keyword>
<keyword id="KW-1003">Cell membrane</keyword>
<keyword id="KW-0449">Lipoprotein</keyword>
<keyword id="KW-0472">Membrane</keyword>
<keyword id="KW-0564">Palmitate</keyword>
<keyword id="KW-1185">Reference proteome</keyword>
<keyword id="KW-0732">Signal</keyword>
<gene>
    <name type="primary">ygeR</name>
    <name type="ordered locus">b2865</name>
    <name type="ordered locus">JW2833</name>
</gene>
<name>YGER_ECOLI</name>
<protein>
    <recommendedName>
        <fullName>Uncharacterized lipoprotein YgeR</fullName>
    </recommendedName>
</protein>